<dbReference type="EMBL" id="AE014299">
    <property type="protein sequence ID" value="AAN53191.1"/>
    <property type="molecule type" value="Genomic_DNA"/>
</dbReference>
<dbReference type="RefSeq" id="NP_715746.1">
    <property type="nucleotide sequence ID" value="NC_004347.2"/>
</dbReference>
<dbReference type="RefSeq" id="WP_011070512.1">
    <property type="nucleotide sequence ID" value="NC_004347.2"/>
</dbReference>
<dbReference type="SMR" id="P59188"/>
<dbReference type="STRING" id="211586.SO_0104"/>
<dbReference type="PaxDb" id="211586-SO_0104"/>
<dbReference type="DNASU" id="1168001"/>
<dbReference type="KEGG" id="son:SO_0104"/>
<dbReference type="PATRIC" id="fig|211586.12.peg.103"/>
<dbReference type="eggNOG" id="COG3058">
    <property type="taxonomic scope" value="Bacteria"/>
</dbReference>
<dbReference type="HOGENOM" id="CLU_055275_0_0_6"/>
<dbReference type="OrthoDB" id="9794151at2"/>
<dbReference type="PhylomeDB" id="P59188"/>
<dbReference type="BioCyc" id="SONE211586:G1GMP-100-MONOMER"/>
<dbReference type="Proteomes" id="UP000008186">
    <property type="component" value="Chromosome"/>
</dbReference>
<dbReference type="GO" id="GO:0005829">
    <property type="term" value="C:cytosol"/>
    <property type="evidence" value="ECO:0000318"/>
    <property type="project" value="GO_Central"/>
</dbReference>
<dbReference type="GO" id="GO:0008199">
    <property type="term" value="F:ferric iron binding"/>
    <property type="evidence" value="ECO:0000318"/>
    <property type="project" value="GO_Central"/>
</dbReference>
<dbReference type="GO" id="GO:0051604">
    <property type="term" value="P:protein maturation"/>
    <property type="evidence" value="ECO:0000318"/>
    <property type="project" value="GO_Central"/>
</dbReference>
<dbReference type="CDD" id="cd16341">
    <property type="entry name" value="FdhE"/>
    <property type="match status" value="1"/>
</dbReference>
<dbReference type="Gene3D" id="3.90.1670.10">
    <property type="entry name" value="FdhE-like domain"/>
    <property type="match status" value="1"/>
</dbReference>
<dbReference type="HAMAP" id="MF_00611">
    <property type="entry name" value="FdeH"/>
    <property type="match status" value="1"/>
</dbReference>
<dbReference type="InterPro" id="IPR024064">
    <property type="entry name" value="FdhE-like_sf"/>
</dbReference>
<dbReference type="InterPro" id="IPR056796">
    <property type="entry name" value="FdhE_C"/>
</dbReference>
<dbReference type="InterPro" id="IPR056797">
    <property type="entry name" value="FdhE_central"/>
</dbReference>
<dbReference type="InterPro" id="IPR056774">
    <property type="entry name" value="FdhE_N"/>
</dbReference>
<dbReference type="InterPro" id="IPR006452">
    <property type="entry name" value="Formate_DH_accessory"/>
</dbReference>
<dbReference type="NCBIfam" id="TIGR01562">
    <property type="entry name" value="FdhE"/>
    <property type="match status" value="1"/>
</dbReference>
<dbReference type="PANTHER" id="PTHR37689">
    <property type="entry name" value="PROTEIN FDHE"/>
    <property type="match status" value="1"/>
</dbReference>
<dbReference type="PANTHER" id="PTHR37689:SF1">
    <property type="entry name" value="PROTEIN FDHE"/>
    <property type="match status" value="1"/>
</dbReference>
<dbReference type="Pfam" id="PF24860">
    <property type="entry name" value="FdhE_C"/>
    <property type="match status" value="1"/>
</dbReference>
<dbReference type="Pfam" id="PF24859">
    <property type="entry name" value="FdhE_central"/>
    <property type="match status" value="1"/>
</dbReference>
<dbReference type="Pfam" id="PF04216">
    <property type="entry name" value="FdhE_N"/>
    <property type="match status" value="1"/>
</dbReference>
<dbReference type="PIRSF" id="PIRSF018296">
    <property type="entry name" value="Format_dh_formtn"/>
    <property type="match status" value="1"/>
</dbReference>
<dbReference type="SUPFAM" id="SSF144020">
    <property type="entry name" value="FdhE-like"/>
    <property type="match status" value="1"/>
</dbReference>
<keyword id="KW-0963">Cytoplasm</keyword>
<keyword id="KW-1185">Reference proteome</keyword>
<reference key="1">
    <citation type="journal article" date="2002" name="Nat. Biotechnol.">
        <title>Genome sequence of the dissimilatory metal ion-reducing bacterium Shewanella oneidensis.</title>
        <authorList>
            <person name="Heidelberg J.F."/>
            <person name="Paulsen I.T."/>
            <person name="Nelson K.E."/>
            <person name="Gaidos E.J."/>
            <person name="Nelson W.C."/>
            <person name="Read T.D."/>
            <person name="Eisen J.A."/>
            <person name="Seshadri R."/>
            <person name="Ward N.L."/>
            <person name="Methe B.A."/>
            <person name="Clayton R.A."/>
            <person name="Meyer T."/>
            <person name="Tsapin A."/>
            <person name="Scott J."/>
            <person name="Beanan M.J."/>
            <person name="Brinkac L.M."/>
            <person name="Daugherty S.C."/>
            <person name="DeBoy R.T."/>
            <person name="Dodson R.J."/>
            <person name="Durkin A.S."/>
            <person name="Haft D.H."/>
            <person name="Kolonay J.F."/>
            <person name="Madupu R."/>
            <person name="Peterson J.D."/>
            <person name="Umayam L.A."/>
            <person name="White O."/>
            <person name="Wolf A.M."/>
            <person name="Vamathevan J.J."/>
            <person name="Weidman J.F."/>
            <person name="Impraim M."/>
            <person name="Lee K."/>
            <person name="Berry K.J."/>
            <person name="Lee C."/>
            <person name="Mueller J."/>
            <person name="Khouri H.M."/>
            <person name="Gill J."/>
            <person name="Utterback T.R."/>
            <person name="McDonald L.A."/>
            <person name="Feldblyum T.V."/>
            <person name="Smith H.O."/>
            <person name="Venter J.C."/>
            <person name="Nealson K.H."/>
            <person name="Fraser C.M."/>
        </authorList>
    </citation>
    <scope>NUCLEOTIDE SEQUENCE [LARGE SCALE GENOMIC DNA]</scope>
    <source>
        <strain>ATCC 700550 / JCM 31522 / CIP 106686 / LMG 19005 / NCIMB 14063 / MR-1</strain>
    </source>
</reference>
<proteinExistence type="inferred from homology"/>
<organism>
    <name type="scientific">Shewanella oneidensis (strain ATCC 700550 / JCM 31522 / CIP 106686 / LMG 19005 / NCIMB 14063 / MR-1)</name>
    <dbReference type="NCBI Taxonomy" id="211586"/>
    <lineage>
        <taxon>Bacteria</taxon>
        <taxon>Pseudomonadati</taxon>
        <taxon>Pseudomonadota</taxon>
        <taxon>Gammaproteobacteria</taxon>
        <taxon>Alteromonadales</taxon>
        <taxon>Shewanellaceae</taxon>
        <taxon>Shewanella</taxon>
    </lineage>
</organism>
<sequence>MSHTAEIPMVPGSESPLELKPLKAVDPKAVYHRRAQRLLSLAKDSPLADYFELCRRVVAIQARLAAEADFGQLLAWGKDEAIPLSHLGSEADSYWQGLLQQLLSDLLPQVGEDLARVLRLLMQQSPEQLTSWGASLRQGHMSAVPARFSLFIWAAMGVYWSHWAPMVIKRIDQRKVAQQNLCPICGSHPVASVIVDQPRAGLRYLHCSLCESEWHYIRAHCTSCGQDKGTTLWSFDDTQAQVRIESCDECHGYTKMMFVEKSPLMDVVADDLATLMLDSELNAKGFGATTVNPLLLAHETEQ</sequence>
<protein>
    <recommendedName>
        <fullName evidence="1">Protein FdhE homolog</fullName>
    </recommendedName>
</protein>
<name>FDHE_SHEON</name>
<accession>P59188</accession>
<gene>
    <name evidence="1" type="primary">fdhE</name>
    <name type="ordered locus">SO_0104</name>
</gene>
<evidence type="ECO:0000255" key="1">
    <source>
        <dbReference type="HAMAP-Rule" id="MF_00611"/>
    </source>
</evidence>
<comment type="function">
    <text evidence="1">Necessary for formate dehydrogenase activity.</text>
</comment>
<comment type="subcellular location">
    <subcellularLocation>
        <location evidence="1">Cytoplasm</location>
    </subcellularLocation>
</comment>
<comment type="similarity">
    <text evidence="1">Belongs to the FdhE family.</text>
</comment>
<feature type="chain" id="PRO_0000189650" description="Protein FdhE homolog">
    <location>
        <begin position="1"/>
        <end position="302"/>
    </location>
</feature>